<organism>
    <name type="scientific">Serratia proteamaculans (strain 568)</name>
    <dbReference type="NCBI Taxonomy" id="399741"/>
    <lineage>
        <taxon>Bacteria</taxon>
        <taxon>Pseudomonadati</taxon>
        <taxon>Pseudomonadota</taxon>
        <taxon>Gammaproteobacteria</taxon>
        <taxon>Enterobacterales</taxon>
        <taxon>Yersiniaceae</taxon>
        <taxon>Serratia</taxon>
    </lineage>
</organism>
<evidence type="ECO:0000255" key="1">
    <source>
        <dbReference type="HAMAP-Rule" id="MF_00735"/>
    </source>
</evidence>
<accession>A8GK75</accession>
<reference key="1">
    <citation type="submission" date="2007-09" db="EMBL/GenBank/DDBJ databases">
        <title>Complete sequence of chromosome of Serratia proteamaculans 568.</title>
        <authorList>
            <consortium name="US DOE Joint Genome Institute"/>
            <person name="Copeland A."/>
            <person name="Lucas S."/>
            <person name="Lapidus A."/>
            <person name="Barry K."/>
            <person name="Glavina del Rio T."/>
            <person name="Dalin E."/>
            <person name="Tice H."/>
            <person name="Pitluck S."/>
            <person name="Chain P."/>
            <person name="Malfatti S."/>
            <person name="Shin M."/>
            <person name="Vergez L."/>
            <person name="Schmutz J."/>
            <person name="Larimer F."/>
            <person name="Land M."/>
            <person name="Hauser L."/>
            <person name="Kyrpides N."/>
            <person name="Kim E."/>
            <person name="Taghavi S."/>
            <person name="Newman L."/>
            <person name="Vangronsveld J."/>
            <person name="van der Lelie D."/>
            <person name="Richardson P."/>
        </authorList>
    </citation>
    <scope>NUCLEOTIDE SEQUENCE [LARGE SCALE GENOMIC DNA]</scope>
    <source>
        <strain>568</strain>
    </source>
</reference>
<comment type="function">
    <text evidence="1">Methylates ribosomal protein L11.</text>
</comment>
<comment type="catalytic activity">
    <reaction evidence="1">
        <text>L-lysyl-[protein] + 3 S-adenosyl-L-methionine = N(6),N(6),N(6)-trimethyl-L-lysyl-[protein] + 3 S-adenosyl-L-homocysteine + 3 H(+)</text>
        <dbReference type="Rhea" id="RHEA:54192"/>
        <dbReference type="Rhea" id="RHEA-COMP:9752"/>
        <dbReference type="Rhea" id="RHEA-COMP:13826"/>
        <dbReference type="ChEBI" id="CHEBI:15378"/>
        <dbReference type="ChEBI" id="CHEBI:29969"/>
        <dbReference type="ChEBI" id="CHEBI:57856"/>
        <dbReference type="ChEBI" id="CHEBI:59789"/>
        <dbReference type="ChEBI" id="CHEBI:61961"/>
    </reaction>
</comment>
<comment type="subcellular location">
    <subcellularLocation>
        <location evidence="1">Cytoplasm</location>
    </subcellularLocation>
</comment>
<comment type="similarity">
    <text evidence="1">Belongs to the methyltransferase superfamily. PrmA family.</text>
</comment>
<proteinExistence type="inferred from homology"/>
<gene>
    <name evidence="1" type="primary">prmA</name>
    <name type="ordered locus">Spro_4421</name>
</gene>
<name>PRMA_SERP5</name>
<protein>
    <recommendedName>
        <fullName evidence="1">Ribosomal protein L11 methyltransferase</fullName>
        <shortName evidence="1">L11 Mtase</shortName>
        <ecNumber evidence="1">2.1.1.-</ecNumber>
    </recommendedName>
</protein>
<sequence length="293" mass="31872">MPWIQLKLNTTGSQAEDLSDALVESGAVSVTFQDTHDNPVFEPLPGETLLWGDTDVIGLYDAETDMAEVVAMLEQHPLLGAGFRHKIEQLEDKDWEREWMDNFHPMRFGQRLWICPSWRDVPDPDAVNVMLDPGLAFGTGTHPTTALCLQWLDGLDLAGKTIIDFGCGSGILAIAALKLGAARAIGIDIDPQAIQASRDNAQRNGVSERLELYLPKDQPADLLADVVVANILAGPLRELAPLIGCLPKSGGHLGLSGVLATQAASVAQAYEDKFTLDPVAEREEWCRITGQRK</sequence>
<dbReference type="EC" id="2.1.1.-" evidence="1"/>
<dbReference type="EMBL" id="CP000826">
    <property type="protein sequence ID" value="ABV43515.1"/>
    <property type="molecule type" value="Genomic_DNA"/>
</dbReference>
<dbReference type="SMR" id="A8GK75"/>
<dbReference type="STRING" id="399741.Spro_4421"/>
<dbReference type="KEGG" id="spe:Spro_4421"/>
<dbReference type="eggNOG" id="COG2264">
    <property type="taxonomic scope" value="Bacteria"/>
</dbReference>
<dbReference type="HOGENOM" id="CLU_049382_4_1_6"/>
<dbReference type="OrthoDB" id="9785995at2"/>
<dbReference type="GO" id="GO:0005829">
    <property type="term" value="C:cytosol"/>
    <property type="evidence" value="ECO:0007669"/>
    <property type="project" value="TreeGrafter"/>
</dbReference>
<dbReference type="GO" id="GO:0016279">
    <property type="term" value="F:protein-lysine N-methyltransferase activity"/>
    <property type="evidence" value="ECO:0007669"/>
    <property type="project" value="TreeGrafter"/>
</dbReference>
<dbReference type="GO" id="GO:0032259">
    <property type="term" value="P:methylation"/>
    <property type="evidence" value="ECO:0007669"/>
    <property type="project" value="UniProtKB-KW"/>
</dbReference>
<dbReference type="CDD" id="cd02440">
    <property type="entry name" value="AdoMet_MTases"/>
    <property type="match status" value="1"/>
</dbReference>
<dbReference type="Gene3D" id="3.40.50.150">
    <property type="entry name" value="Vaccinia Virus protein VP39"/>
    <property type="match status" value="1"/>
</dbReference>
<dbReference type="HAMAP" id="MF_00735">
    <property type="entry name" value="Methyltr_PrmA"/>
    <property type="match status" value="1"/>
</dbReference>
<dbReference type="InterPro" id="IPR050078">
    <property type="entry name" value="Ribosomal_L11_MeTrfase_PrmA"/>
</dbReference>
<dbReference type="InterPro" id="IPR004498">
    <property type="entry name" value="Ribosomal_PrmA_MeTrfase"/>
</dbReference>
<dbReference type="InterPro" id="IPR029063">
    <property type="entry name" value="SAM-dependent_MTases_sf"/>
</dbReference>
<dbReference type="NCBIfam" id="TIGR00406">
    <property type="entry name" value="prmA"/>
    <property type="match status" value="1"/>
</dbReference>
<dbReference type="PANTHER" id="PTHR43648">
    <property type="entry name" value="ELECTRON TRANSFER FLAVOPROTEIN BETA SUBUNIT LYSINE METHYLTRANSFERASE"/>
    <property type="match status" value="1"/>
</dbReference>
<dbReference type="PANTHER" id="PTHR43648:SF1">
    <property type="entry name" value="ELECTRON TRANSFER FLAVOPROTEIN BETA SUBUNIT LYSINE METHYLTRANSFERASE"/>
    <property type="match status" value="1"/>
</dbReference>
<dbReference type="Pfam" id="PF06325">
    <property type="entry name" value="PrmA"/>
    <property type="match status" value="1"/>
</dbReference>
<dbReference type="PIRSF" id="PIRSF000401">
    <property type="entry name" value="RPL11_MTase"/>
    <property type="match status" value="1"/>
</dbReference>
<dbReference type="SUPFAM" id="SSF53335">
    <property type="entry name" value="S-adenosyl-L-methionine-dependent methyltransferases"/>
    <property type="match status" value="1"/>
</dbReference>
<keyword id="KW-0963">Cytoplasm</keyword>
<keyword id="KW-0489">Methyltransferase</keyword>
<keyword id="KW-0949">S-adenosyl-L-methionine</keyword>
<keyword id="KW-0808">Transferase</keyword>
<feature type="chain" id="PRO_1000062129" description="Ribosomal protein L11 methyltransferase">
    <location>
        <begin position="1"/>
        <end position="293"/>
    </location>
</feature>
<feature type="binding site" evidence="1">
    <location>
        <position position="145"/>
    </location>
    <ligand>
        <name>S-adenosyl-L-methionine</name>
        <dbReference type="ChEBI" id="CHEBI:59789"/>
    </ligand>
</feature>
<feature type="binding site" evidence="1">
    <location>
        <position position="166"/>
    </location>
    <ligand>
        <name>S-adenosyl-L-methionine</name>
        <dbReference type="ChEBI" id="CHEBI:59789"/>
    </ligand>
</feature>
<feature type="binding site" evidence="1">
    <location>
        <position position="188"/>
    </location>
    <ligand>
        <name>S-adenosyl-L-methionine</name>
        <dbReference type="ChEBI" id="CHEBI:59789"/>
    </ligand>
</feature>
<feature type="binding site" evidence="1">
    <location>
        <position position="230"/>
    </location>
    <ligand>
        <name>S-adenosyl-L-methionine</name>
        <dbReference type="ChEBI" id="CHEBI:59789"/>
    </ligand>
</feature>